<sequence length="582" mass="65584">MHILQVITGATLVSVPFVSAIPSSTSEFLPSTAEQNSAVLHSQGRSPPRLWTRLRDSIIETIWRVPSRQHNPSRIPSSLSIPRAPSSIRARYGDDVVLRFTIRSQNDVQALIEASNILFLDIWASTNEWVDIRLAKDVVSSLLGLLPSSLRTAHVPIIHDLAQAVYESYPQPVSSVPNPHHAFSPSVQQSSETQNIFFQDYQPLSVIIPWMRLLASMFSTHVRLVNLGTSYEGREIVGFRIGVRPANADLPTERRKAIVITGGSHAREWIGVSTVNYVAYSLITGYGKSRAITKLVEEFDWVLIPTMNPDGYVYTWETDRLWRKNRQENNLQFCPGVDLDRTWGYEWDGSDSRSNPCSEDFAGDGPFGGRESKVIAQWALNETNHHNVTFVGFLDLHSYSQQILYPYSYSCTNIPPTLENLEELAIGIAKAIRLTDHEHYDVSSACEGSVSSHKKRRGAALRSMQSAGGSALDWFYHDLHVRYAYQLKLRDKGGYGFLLPKKNIVPTGKEVYNAVLVFGQFLLGRGAQDIDWEGDFQFPAHSRPNVPEKEYRGPDEEYEISNQLEDDDNENDTLLGFRTQKV</sequence>
<reference key="1">
    <citation type="submission" date="2010-03" db="EMBL/GenBank/DDBJ databases">
        <title>The genome sequence of Coccidioides posadasii strain Silveira.</title>
        <authorList>
            <consortium name="The Broad Institute Genome Sequencing Center for Infectious Disease"/>
            <person name="Neafsey D."/>
            <person name="Orbach M."/>
            <person name="Henn M.R."/>
            <person name="Cole G.T."/>
            <person name="Galgiani J."/>
            <person name="Gardner M.J."/>
            <person name="Kirkland T.N."/>
            <person name="Taylor J.W."/>
            <person name="Young S.K."/>
            <person name="Zeng Q."/>
            <person name="Koehrsen M."/>
            <person name="Alvarado L."/>
            <person name="Berlin A."/>
            <person name="Borenstein D."/>
            <person name="Chapman S.B."/>
            <person name="Chen Z."/>
            <person name="Engels R."/>
            <person name="Freedman E."/>
            <person name="Gellesch M."/>
            <person name="Goldberg J."/>
            <person name="Griggs A."/>
            <person name="Gujja S."/>
            <person name="Heilman E."/>
            <person name="Heiman D."/>
            <person name="Howarth C."/>
            <person name="Jen D."/>
            <person name="Larson L."/>
            <person name="Mehta T."/>
            <person name="Neiman D."/>
            <person name="Park D."/>
            <person name="Pearson M."/>
            <person name="Richards J."/>
            <person name="Roberts A."/>
            <person name="Saif S."/>
            <person name="Shea T."/>
            <person name="Shenoy N."/>
            <person name="Sisk P."/>
            <person name="Stolte C."/>
            <person name="Sykes S."/>
            <person name="Walk T."/>
            <person name="White J."/>
            <person name="Yandava C."/>
            <person name="Haas B."/>
            <person name="Nusbaum C."/>
            <person name="Birren B."/>
        </authorList>
    </citation>
    <scope>NUCLEOTIDE SEQUENCE [LARGE SCALE GENOMIC DNA]</scope>
    <source>
        <strain>RMSCC 757 / Silveira</strain>
    </source>
</reference>
<gene>
    <name type="primary">ECM14</name>
    <name type="ORF">CPSG_08031</name>
</gene>
<feature type="signal peptide" evidence="4">
    <location>
        <begin position="1"/>
        <end position="20"/>
    </location>
</feature>
<feature type="propeptide" id="PRO_0000453242" evidence="3">
    <location>
        <begin position="21"/>
        <end position="172"/>
    </location>
</feature>
<feature type="chain" id="PRO_0000411182" description="Inactive metallocarboxypeptidase ECM14">
    <location>
        <begin position="173"/>
        <end position="582"/>
    </location>
</feature>
<feature type="domain" description="Peptidase M14" evidence="5">
    <location>
        <begin position="200"/>
        <end position="522"/>
    </location>
</feature>
<feature type="region of interest" description="Disordered" evidence="6">
    <location>
        <begin position="561"/>
        <end position="582"/>
    </location>
</feature>
<feature type="compositionally biased region" description="Acidic residues" evidence="6">
    <location>
        <begin position="561"/>
        <end position="571"/>
    </location>
</feature>
<feature type="binding site" evidence="1">
    <location>
        <begin position="265"/>
        <end position="268"/>
    </location>
    <ligand>
        <name>substrate</name>
    </ligand>
</feature>
<feature type="binding site" evidence="5">
    <location>
        <position position="265"/>
    </location>
    <ligand>
        <name>Zn(2+)</name>
        <dbReference type="ChEBI" id="CHEBI:29105"/>
        <note>catalytic</note>
    </ligand>
</feature>
<feature type="binding site" evidence="5">
    <location>
        <position position="268"/>
    </location>
    <ligand>
        <name>Zn(2+)</name>
        <dbReference type="ChEBI" id="CHEBI:29105"/>
        <note>catalytic</note>
    </ligand>
</feature>
<feature type="binding site" evidence="1">
    <location>
        <position position="323"/>
    </location>
    <ligand>
        <name>substrate</name>
    </ligand>
</feature>
<feature type="binding site" evidence="1">
    <location>
        <begin position="340"/>
        <end position="341"/>
    </location>
    <ligand>
        <name>substrate</name>
    </ligand>
</feature>
<feature type="binding site" evidence="5">
    <location>
        <position position="397"/>
    </location>
    <ligand>
        <name>Zn(2+)</name>
        <dbReference type="ChEBI" id="CHEBI:29105"/>
        <note>catalytic</note>
    </ligand>
</feature>
<feature type="binding site" evidence="1">
    <location>
        <begin position="398"/>
        <end position="399"/>
    </location>
    <ligand>
        <name>substrate</name>
    </ligand>
</feature>
<feature type="glycosylation site" description="N-linked (GlcNAc...) asparagine" evidence="4">
    <location>
        <position position="381"/>
    </location>
</feature>
<feature type="glycosylation site" description="N-linked (GlcNAc...) asparagine" evidence="4">
    <location>
        <position position="387"/>
    </location>
</feature>
<feature type="glycosylation site" description="N-linked (GlcNAc...) asparagine" evidence="4">
    <location>
        <position position="571"/>
    </location>
</feature>
<feature type="disulfide bond" evidence="2">
    <location>
        <begin position="334"/>
        <end position="357"/>
    </location>
</feature>
<organism>
    <name type="scientific">Coccidioides posadasii (strain RMSCC 757 / Silveira)</name>
    <name type="common">Valley fever fungus</name>
    <dbReference type="NCBI Taxonomy" id="443226"/>
    <lineage>
        <taxon>Eukaryota</taxon>
        <taxon>Fungi</taxon>
        <taxon>Dikarya</taxon>
        <taxon>Ascomycota</taxon>
        <taxon>Pezizomycotina</taxon>
        <taxon>Eurotiomycetes</taxon>
        <taxon>Eurotiomycetidae</taxon>
        <taxon>Onygenales</taxon>
        <taxon>Onygenaceae</taxon>
        <taxon>Coccidioides</taxon>
    </lineage>
</organism>
<comment type="function">
    <text evidence="3">Inactive carboxypeptidase that may play a role in cell wall organization and biogenesis.</text>
</comment>
<comment type="cofactor">
    <cofactor evidence="1">
        <name>Zn(2+)</name>
        <dbReference type="ChEBI" id="CHEBI:29105"/>
    </cofactor>
    <text evidence="1">Binds 1 zinc ion per subunit.</text>
</comment>
<comment type="subcellular location">
    <subcellularLocation>
        <location evidence="3">Vacuole</location>
    </subcellularLocation>
    <subcellularLocation>
        <location evidence="3">Secreted</location>
    </subcellularLocation>
</comment>
<comment type="similarity">
    <text evidence="7">Belongs to the peptidase M14 family.</text>
</comment>
<comment type="caution">
    <text evidence="3">Lacks the conserved Glu residue in position 488 essential for carbopeptidase activity. The mature form lacks catalytic activity towards synthetic peptide substrates.</text>
</comment>
<proteinExistence type="inferred from homology"/>
<keyword id="KW-0961">Cell wall biogenesis/degradation</keyword>
<keyword id="KW-1015">Disulfide bond</keyword>
<keyword id="KW-0325">Glycoprotein</keyword>
<keyword id="KW-0479">Metal-binding</keyword>
<keyword id="KW-1185">Reference proteome</keyword>
<keyword id="KW-0964">Secreted</keyword>
<keyword id="KW-0732">Signal</keyword>
<keyword id="KW-0926">Vacuole</keyword>
<keyword id="KW-0862">Zinc</keyword>
<accession>E9DD69</accession>
<dbReference type="EMBL" id="GL636500">
    <property type="protein sequence ID" value="EFW15594.1"/>
    <property type="molecule type" value="Genomic_DNA"/>
</dbReference>
<dbReference type="RefSeq" id="XP_003066267.2">
    <property type="nucleotide sequence ID" value="XM_003066221.2"/>
</dbReference>
<dbReference type="SMR" id="E9DD69"/>
<dbReference type="STRING" id="443226.E9DD69"/>
<dbReference type="GlyCosmos" id="E9DD69">
    <property type="glycosylation" value="3 sites, No reported glycans"/>
</dbReference>
<dbReference type="GeneID" id="9691737"/>
<dbReference type="VEuPathDB" id="FungiDB:CPSG_08031"/>
<dbReference type="VEuPathDB" id="FungiDB:D8B26_002308"/>
<dbReference type="eggNOG" id="KOG2650">
    <property type="taxonomic scope" value="Eukaryota"/>
</dbReference>
<dbReference type="HOGENOM" id="CLU_019326_1_0_1"/>
<dbReference type="OMA" id="WFYHQLH"/>
<dbReference type="OrthoDB" id="3275at33183"/>
<dbReference type="Proteomes" id="UP000002497">
    <property type="component" value="Unassembled WGS sequence"/>
</dbReference>
<dbReference type="GO" id="GO:0005576">
    <property type="term" value="C:extracellular region"/>
    <property type="evidence" value="ECO:0007669"/>
    <property type="project" value="UniProtKB-SubCell"/>
</dbReference>
<dbReference type="GO" id="GO:0005773">
    <property type="term" value="C:vacuole"/>
    <property type="evidence" value="ECO:0007669"/>
    <property type="project" value="UniProtKB-SubCell"/>
</dbReference>
<dbReference type="GO" id="GO:0008270">
    <property type="term" value="F:zinc ion binding"/>
    <property type="evidence" value="ECO:0007669"/>
    <property type="project" value="InterPro"/>
</dbReference>
<dbReference type="GO" id="GO:0071555">
    <property type="term" value="P:cell wall organization"/>
    <property type="evidence" value="ECO:0007669"/>
    <property type="project" value="UniProtKB-KW"/>
</dbReference>
<dbReference type="GO" id="GO:0006508">
    <property type="term" value="P:proteolysis"/>
    <property type="evidence" value="ECO:0007669"/>
    <property type="project" value="InterPro"/>
</dbReference>
<dbReference type="CDD" id="cd03860">
    <property type="entry name" value="M14_CP_A-B_like"/>
    <property type="match status" value="1"/>
</dbReference>
<dbReference type="FunFam" id="3.40.630.10:FF:000060">
    <property type="entry name" value="Putative metallocarboxypeptidase ecm14"/>
    <property type="match status" value="1"/>
</dbReference>
<dbReference type="Gene3D" id="3.40.630.10">
    <property type="entry name" value="Zn peptidases"/>
    <property type="match status" value="1"/>
</dbReference>
<dbReference type="InterPro" id="IPR000834">
    <property type="entry name" value="Peptidase_M14"/>
</dbReference>
<dbReference type="PANTHER" id="PTHR11705:SF147">
    <property type="entry name" value="INACTIVE METALLOCARBOXYPEPTIDASE ECM14"/>
    <property type="match status" value="1"/>
</dbReference>
<dbReference type="PANTHER" id="PTHR11705">
    <property type="entry name" value="PROTEASE FAMILY M14 CARBOXYPEPTIDASE A,B"/>
    <property type="match status" value="1"/>
</dbReference>
<dbReference type="Pfam" id="PF00246">
    <property type="entry name" value="Peptidase_M14"/>
    <property type="match status" value="1"/>
</dbReference>
<dbReference type="PRINTS" id="PR00765">
    <property type="entry name" value="CRBOXYPTASEA"/>
</dbReference>
<dbReference type="SMART" id="SM00631">
    <property type="entry name" value="Zn_pept"/>
    <property type="match status" value="1"/>
</dbReference>
<dbReference type="SUPFAM" id="SSF53187">
    <property type="entry name" value="Zn-dependent exopeptidases"/>
    <property type="match status" value="1"/>
</dbReference>
<dbReference type="PROSITE" id="PS00132">
    <property type="entry name" value="CARBOXYPEPT_ZN_1"/>
    <property type="match status" value="1"/>
</dbReference>
<dbReference type="PROSITE" id="PS52035">
    <property type="entry name" value="PEPTIDASE_M14"/>
    <property type="match status" value="1"/>
</dbReference>
<name>ECM14_COCPS</name>
<protein>
    <recommendedName>
        <fullName evidence="7">Inactive metallocarboxypeptidase ECM14</fullName>
    </recommendedName>
</protein>
<evidence type="ECO:0000250" key="1">
    <source>
        <dbReference type="UniProtKB" id="P00730"/>
    </source>
</evidence>
<evidence type="ECO:0000250" key="2">
    <source>
        <dbReference type="UniProtKB" id="P15085"/>
    </source>
</evidence>
<evidence type="ECO:0000250" key="3">
    <source>
        <dbReference type="UniProtKB" id="P38836"/>
    </source>
</evidence>
<evidence type="ECO:0000255" key="4"/>
<evidence type="ECO:0000255" key="5">
    <source>
        <dbReference type="PROSITE-ProRule" id="PRU01379"/>
    </source>
</evidence>
<evidence type="ECO:0000256" key="6">
    <source>
        <dbReference type="SAM" id="MobiDB-lite"/>
    </source>
</evidence>
<evidence type="ECO:0000305" key="7"/>